<name>PLMT_YEAST</name>
<accession>P05375</accession>
<accession>D6VWP3</accession>
<protein>
    <recommendedName>
        <fullName evidence="1 20">Phosphatidyl-N-methylethanolamine N-methyltransferase</fullName>
        <ecNumber evidence="8 9 11">2.1.1.17</ecNumber>
        <ecNumber evidence="1 7 8 9 11">2.1.1.71</ecNumber>
    </recommendedName>
    <alternativeName>
        <fullName evidence="22">Overproducer of inositol protein 3</fullName>
    </alternativeName>
    <alternativeName>
        <fullName evidence="1 17 18">Phospholipid methyltransferase</fullName>
        <shortName evidence="1 16 18">PLMT</shortName>
    </alternativeName>
</protein>
<gene>
    <name evidence="19" type="primary">OPI3</name>
    <name evidence="17" type="synonym">PEM2</name>
    <name evidence="23" type="ordered locus">YJR073C</name>
    <name type="ORF">J1824</name>
</gene>
<evidence type="ECO:0000255" key="1">
    <source>
        <dbReference type="HAMAP-Rule" id="MF_03216"/>
    </source>
</evidence>
<evidence type="ECO:0000269" key="2">
    <source>
    </source>
</evidence>
<evidence type="ECO:0000269" key="3">
    <source>
    </source>
</evidence>
<evidence type="ECO:0000269" key="4">
    <source>
    </source>
</evidence>
<evidence type="ECO:0000269" key="5">
    <source>
    </source>
</evidence>
<evidence type="ECO:0000269" key="6">
    <source>
    </source>
</evidence>
<evidence type="ECO:0000269" key="7">
    <source>
    </source>
</evidence>
<evidence type="ECO:0000269" key="8">
    <source>
    </source>
</evidence>
<evidence type="ECO:0000269" key="9">
    <source>
    </source>
</evidence>
<evidence type="ECO:0000269" key="10">
    <source>
    </source>
</evidence>
<evidence type="ECO:0000269" key="11">
    <source>
    </source>
</evidence>
<evidence type="ECO:0000269" key="12">
    <source>
    </source>
</evidence>
<evidence type="ECO:0000269" key="13">
    <source>
    </source>
</evidence>
<evidence type="ECO:0000269" key="14">
    <source>
    </source>
</evidence>
<evidence type="ECO:0000269" key="15">
    <source>
    </source>
</evidence>
<evidence type="ECO:0000303" key="16">
    <source>
    </source>
</evidence>
<evidence type="ECO:0000303" key="17">
    <source>
    </source>
</evidence>
<evidence type="ECO:0000303" key="18">
    <source>
    </source>
</evidence>
<evidence type="ECO:0000303" key="19">
    <source>
    </source>
</evidence>
<evidence type="ECO:0000305" key="20"/>
<evidence type="ECO:0000305" key="21">
    <source>
    </source>
</evidence>
<evidence type="ECO:0000305" key="22">
    <source>
    </source>
</evidence>
<evidence type="ECO:0000312" key="23">
    <source>
        <dbReference type="SGD" id="S000003834"/>
    </source>
</evidence>
<feature type="chain" id="PRO_0000193924" description="Phosphatidyl-N-methylethanolamine N-methyltransferase">
    <location>
        <begin position="1"/>
        <end position="206"/>
    </location>
</feature>
<feature type="topological domain" description="Lumenal" evidence="1">
    <location>
        <begin position="1"/>
        <end position="20"/>
    </location>
</feature>
<feature type="intramembrane region" description="Helical" evidence="1">
    <location>
        <begin position="21"/>
        <end position="41"/>
    </location>
</feature>
<feature type="topological domain" description="Lumenal" evidence="1">
    <location>
        <begin position="42"/>
        <end position="53"/>
    </location>
</feature>
<feature type="transmembrane region" description="Helical" evidence="1">
    <location>
        <begin position="54"/>
        <end position="74"/>
    </location>
</feature>
<feature type="topological domain" description="Cytoplasmic" evidence="1">
    <location>
        <begin position="75"/>
        <end position="101"/>
    </location>
</feature>
<feature type="transmembrane region" description="Helical" evidence="1">
    <location>
        <begin position="102"/>
        <end position="122"/>
    </location>
</feature>
<feature type="topological domain" description="Lumenal" evidence="1">
    <location>
        <begin position="123"/>
        <end position="165"/>
    </location>
</feature>
<feature type="transmembrane region" description="Helical" evidence="1">
    <location>
        <begin position="166"/>
        <end position="186"/>
    </location>
</feature>
<feature type="topological domain" description="Cytoplasmic" evidence="1">
    <location>
        <begin position="187"/>
        <end position="206"/>
    </location>
</feature>
<feature type="binding site" evidence="1">
    <location>
        <begin position="106"/>
        <end position="108"/>
    </location>
    <ligand>
        <name>S-adenosyl-L-methionine</name>
        <dbReference type="ChEBI" id="CHEBI:59789"/>
    </ligand>
</feature>
<feature type="binding site" evidence="1">
    <location>
        <begin position="188"/>
        <end position="189"/>
    </location>
    <ligand>
        <name>S-adenosyl-L-methionine</name>
        <dbReference type="ChEBI" id="CHEBI:59789"/>
    </ligand>
</feature>
<keyword id="KW-0256">Endoplasmic reticulum</keyword>
<keyword id="KW-0444">Lipid biosynthesis</keyword>
<keyword id="KW-0443">Lipid metabolism</keyword>
<keyword id="KW-0472">Membrane</keyword>
<keyword id="KW-0489">Methyltransferase</keyword>
<keyword id="KW-0496">Mitochondrion</keyword>
<keyword id="KW-0594">Phospholipid biosynthesis</keyword>
<keyword id="KW-1208">Phospholipid metabolism</keyword>
<keyword id="KW-1185">Reference proteome</keyword>
<keyword id="KW-0949">S-adenosyl-L-methionine</keyword>
<keyword id="KW-0808">Transferase</keyword>
<keyword id="KW-0812">Transmembrane</keyword>
<keyword id="KW-1133">Transmembrane helix</keyword>
<comment type="function">
    <text evidence="1 7 8 9 10 11 12 13 14">Catalyzes the second two steps of the methylation pathway of phosphatidylcholine biosynthesis, the SAM-dependent methylation of phosphatidylmonomethylethanolamine (PMME) to phosphatidyldimethylethanolamine (PDME) and of PDME to phosphatidylcholine (PC). Can also catalyze the first methylation reaction of PE to PMME in the absence of PE methyltransferase CHO2.</text>
</comment>
<comment type="catalytic activity">
    <reaction evidence="8 9 11">
        <text>a 1,2-diacyl-sn-glycero-3-phosphoethanolamine + S-adenosyl-L-methionine = a 1,2-diacyl-sn-glycero-3-phospho-N-methylethanolamine + S-adenosyl-L-homocysteine + H(+)</text>
        <dbReference type="Rhea" id="RHEA:11164"/>
        <dbReference type="ChEBI" id="CHEBI:15378"/>
        <dbReference type="ChEBI" id="CHEBI:57856"/>
        <dbReference type="ChEBI" id="CHEBI:59789"/>
        <dbReference type="ChEBI" id="CHEBI:64573"/>
        <dbReference type="ChEBI" id="CHEBI:64612"/>
        <dbReference type="EC" id="2.1.1.17"/>
    </reaction>
</comment>
<comment type="catalytic activity">
    <reaction evidence="1 7 8 9 11">
        <text>a 1,2-diacyl-sn-glycero-3-phospho-N-methylethanolamine + S-adenosyl-L-methionine = a 1,2-diacyl-sn-glycero-3-phospho-N,N-dimethylethanolamine + S-adenosyl-L-homocysteine + H(+)</text>
        <dbReference type="Rhea" id="RHEA:32735"/>
        <dbReference type="ChEBI" id="CHEBI:15378"/>
        <dbReference type="ChEBI" id="CHEBI:57856"/>
        <dbReference type="ChEBI" id="CHEBI:59789"/>
        <dbReference type="ChEBI" id="CHEBI:64572"/>
        <dbReference type="ChEBI" id="CHEBI:64573"/>
        <dbReference type="EC" id="2.1.1.71"/>
    </reaction>
</comment>
<comment type="catalytic activity">
    <reaction evidence="1 7 8 9 11">
        <text>a 1,2-diacyl-sn-glycero-3-phospho-N,N-dimethylethanolamine + S-adenosyl-L-methionine = a 1,2-diacyl-sn-glycero-3-phosphocholine + S-adenosyl-L-homocysteine + H(+)</text>
        <dbReference type="Rhea" id="RHEA:32739"/>
        <dbReference type="ChEBI" id="CHEBI:15378"/>
        <dbReference type="ChEBI" id="CHEBI:57643"/>
        <dbReference type="ChEBI" id="CHEBI:57856"/>
        <dbReference type="ChEBI" id="CHEBI:59789"/>
        <dbReference type="ChEBI" id="CHEBI:64572"/>
        <dbReference type="EC" id="2.1.1.71"/>
    </reaction>
</comment>
<comment type="biophysicochemical properties">
    <kinetics>
        <KM evidence="11">180 uM for S-adenosyl-L-methionine (in presence of phosphatidylethanolamine (PE) as substrate)</KM>
        <KM evidence="11">190 uM for S-adenosyl-L-methionine (in presence of phosphatidyl-N-methylethanolamine (PMME) as substrate)</KM>
        <KM evidence="11">240 uM for S-adenosyl-L-methionine (in presence of phosphatidyl-N-dimethylethanolamine (PDME) as substrate)</KM>
        <KM evidence="11">270 uM for phosphatidyl-N-methylethanolamine (PMME)</KM>
        <KM evidence="11">110 uM for phosphatidyl-N-dimethylethanolamine (PDME)</KM>
        <KM evidence="7">54 uM for S-adenosyl-L-methionine (in presence of phosphatidyl-N-methylethanolamine (PMME) as substrate)</KM>
        <KM evidence="7">59 uM for S-adenosyl-L-methionine (in presence of phosphatidyl-N-dimethylethanolamine (PDME) as substrate)</KM>
        <KM evidence="7">380 uM for phosphatidyl-N-methylethanolamine (PMME)</KM>
        <KM evidence="7">180 uM for phosphatidyl-N-dimethylethanolamine (PDME)</KM>
    </kinetics>
    <phDependence>
        <text evidence="11">Optimum pH is 8.1.</text>
    </phDependence>
</comment>
<comment type="pathway">
    <text evidence="1 21">Phospholipid metabolism; phosphatidylcholine biosynthesis.</text>
</comment>
<comment type="subcellular location">
    <subcellularLocation>
        <location evidence="1 2">Endoplasmic reticulum membrane</location>
        <topology evidence="1">Multi-pass membrane protein</topology>
    </subcellularLocation>
    <subcellularLocation>
        <location evidence="1 4">Mitochondrion membrane</location>
        <topology evidence="1">Multi-pass membrane protein</topology>
    </subcellularLocation>
</comment>
<comment type="induction">
    <text evidence="5 6 13 15">Expression is repressed by inositol and choline. The 5' flanking region contains two copies of the CATRTGAA motif and a 5'-AAACCCACACATG-3' GRFI site, which are involved in the regulation of expression. OPI1 and SIN3 play the role of repressors for OPI3 expression whereas UME6 is an activator of OPI3 expression.</text>
</comment>
<comment type="miscellaneous">
    <text evidence="3">Present with 5890 molecules/cell in log phase SD medium.</text>
</comment>
<comment type="similarity">
    <text evidence="1">Belongs to the class VI-like SAM-binding methyltransferase superfamily. PEMT/PEM2 methyltransferase family.</text>
</comment>
<reference key="1">
    <citation type="journal article" date="1987" name="J. Biol. Chem.">
        <title>Yeast phosphatidylethanolamine methylation pathway. Cloning and characterization of two distinct methyltransferase genes.</title>
        <authorList>
            <person name="Kodaki T."/>
            <person name="Yamashita S."/>
        </authorList>
    </citation>
    <scope>NUCLEOTIDE SEQUENCE [GENOMIC DNA]</scope>
    <scope>FUNCTION</scope>
    <scope>CATALYTIC ACTIVITY</scope>
</reference>
<reference key="2">
    <citation type="journal article" date="1996" name="Yeast">
        <title>Analysis of a 62 kb DNA sequence of chromosome X reveals 36 open reading frames and a gene cluster with a counterpart on chromosome XI.</title>
        <authorList>
            <person name="Huang M.-E."/>
            <person name="Manus V."/>
            <person name="Chuat J.-C."/>
            <person name="Galibert F."/>
        </authorList>
    </citation>
    <scope>NUCLEOTIDE SEQUENCE [GENOMIC DNA]</scope>
    <source>
        <strain>ATCC 204508 / S288c</strain>
    </source>
</reference>
<reference key="3">
    <citation type="journal article" date="1996" name="EMBO J.">
        <title>Complete nucleotide sequence of Saccharomyces cerevisiae chromosome X.</title>
        <authorList>
            <person name="Galibert F."/>
            <person name="Alexandraki D."/>
            <person name="Baur A."/>
            <person name="Boles E."/>
            <person name="Chalwatzis N."/>
            <person name="Chuat J.-C."/>
            <person name="Coster F."/>
            <person name="Cziepluch C."/>
            <person name="de Haan M."/>
            <person name="Domdey H."/>
            <person name="Durand P."/>
            <person name="Entian K.-D."/>
            <person name="Gatius M."/>
            <person name="Goffeau A."/>
            <person name="Grivell L.A."/>
            <person name="Hennemann A."/>
            <person name="Herbert C.J."/>
            <person name="Heumann K."/>
            <person name="Hilger F."/>
            <person name="Hollenberg C.P."/>
            <person name="Huang M.-E."/>
            <person name="Jacq C."/>
            <person name="Jauniaux J.-C."/>
            <person name="Katsoulou C."/>
            <person name="Kirchrath L."/>
            <person name="Kleine K."/>
            <person name="Kordes E."/>
            <person name="Koetter P."/>
            <person name="Liebl S."/>
            <person name="Louis E.J."/>
            <person name="Manus V."/>
            <person name="Mewes H.-W."/>
            <person name="Miosga T."/>
            <person name="Obermaier B."/>
            <person name="Perea J."/>
            <person name="Pohl T.M."/>
            <person name="Portetelle D."/>
            <person name="Pujol A."/>
            <person name="Purnelle B."/>
            <person name="Ramezani Rad M."/>
            <person name="Rasmussen S.W."/>
            <person name="Rose M."/>
            <person name="Rossau R."/>
            <person name="Schaaff-Gerstenschlaeger I."/>
            <person name="Smits P.H.M."/>
            <person name="Scarcez T."/>
            <person name="Soriano N."/>
            <person name="To Van D."/>
            <person name="Tzermia M."/>
            <person name="Van Broekhoven A."/>
            <person name="Vandenbol M."/>
            <person name="Wedler H."/>
            <person name="von Wettstein D."/>
            <person name="Wambutt R."/>
            <person name="Zagulski M."/>
            <person name="Zollner A."/>
            <person name="Karpfinger-Hartl L."/>
        </authorList>
    </citation>
    <scope>NUCLEOTIDE SEQUENCE [LARGE SCALE GENOMIC DNA]</scope>
    <source>
        <strain>ATCC 204508 / S288c</strain>
    </source>
</reference>
<reference key="4">
    <citation type="journal article" date="2014" name="G3 (Bethesda)">
        <title>The reference genome sequence of Saccharomyces cerevisiae: Then and now.</title>
        <authorList>
            <person name="Engel S.R."/>
            <person name="Dietrich F.S."/>
            <person name="Fisk D.G."/>
            <person name="Binkley G."/>
            <person name="Balakrishnan R."/>
            <person name="Costanzo M.C."/>
            <person name="Dwight S.S."/>
            <person name="Hitz B.C."/>
            <person name="Karra K."/>
            <person name="Nash R.S."/>
            <person name="Weng S."/>
            <person name="Wong E.D."/>
            <person name="Lloyd P."/>
            <person name="Skrzypek M.S."/>
            <person name="Miyasato S.R."/>
            <person name="Simison M."/>
            <person name="Cherry J.M."/>
        </authorList>
    </citation>
    <scope>GENOME REANNOTATION</scope>
    <source>
        <strain>ATCC 204508 / S288c</strain>
    </source>
</reference>
<reference key="5">
    <citation type="journal article" date="2007" name="Genome Res.">
        <title>Approaching a complete repository of sequence-verified protein-encoding clones for Saccharomyces cerevisiae.</title>
        <authorList>
            <person name="Hu Y."/>
            <person name="Rolfs A."/>
            <person name="Bhullar B."/>
            <person name="Murthy T.V.S."/>
            <person name="Zhu C."/>
            <person name="Berger M.F."/>
            <person name="Camargo A.A."/>
            <person name="Kelley F."/>
            <person name="McCarron S."/>
            <person name="Jepson D."/>
            <person name="Richardson A."/>
            <person name="Raphael J."/>
            <person name="Moreira D."/>
            <person name="Taycher E."/>
            <person name="Zuo D."/>
            <person name="Mohr S."/>
            <person name="Kane M.F."/>
            <person name="Williamson J."/>
            <person name="Simpson A.J.G."/>
            <person name="Bulyk M.L."/>
            <person name="Harlow E."/>
            <person name="Marsischky G."/>
            <person name="Kolodner R.D."/>
            <person name="LaBaer J."/>
        </authorList>
    </citation>
    <scope>NUCLEOTIDE SEQUENCE [GENOMIC DNA]</scope>
    <source>
        <strain>ATCC 204508 / S288c</strain>
    </source>
</reference>
<reference key="6">
    <citation type="journal article" date="1982" name="Eur. J. Biochem.">
        <title>Regulation of the phosphatidylethanolamine methylation pathway in Saccharomyces cerevisiae.</title>
        <authorList>
            <person name="Yamashita S."/>
            <person name="Oshima A."/>
            <person name="Nikawa J."/>
            <person name="Hosaka K."/>
        </authorList>
    </citation>
    <scope>FUNCTION</scope>
    <scope>INDUCTION</scope>
</reference>
<reference key="7">
    <citation type="journal article" date="1982" name="Genetics">
        <title>Regulatory mutations of inositol biosynthesis in yeast: isolation of inositol-excreting mutants.</title>
        <authorList>
            <person name="Greenberg M.L."/>
            <person name="Reiner B."/>
            <person name="Henry S.A."/>
        </authorList>
    </citation>
    <scope>FUNCTION</scope>
</reference>
<reference key="8">
    <citation type="journal article" date="1983" name="J. Bacteriol.">
        <title>Yeast mutant defective in phosphatidylcholine synthesis.</title>
        <authorList>
            <person name="Greenberg M.L."/>
            <person name="Klig L.S."/>
            <person name="Letts V.A."/>
            <person name="Loewy B.S."/>
            <person name="Henry S.A."/>
        </authorList>
    </citation>
    <scope>FUNCTION</scope>
    <scope>PATHWAY</scope>
</reference>
<reference key="9">
    <citation type="journal article" date="1989" name="Eur. J. Biochem.">
        <title>Characterization of the methyltransferases in the yeast phosphatidylethanolamine methylation pathway by selective gene disruption.</title>
        <authorList>
            <person name="Kodaki T."/>
            <person name="Yamashita S."/>
        </authorList>
    </citation>
    <scope>CATALYTIC ACTIVITY</scope>
    <scope>BIOPHYSICOCHEMICAL PROPERTIES</scope>
    <scope>FUNCTION</scope>
</reference>
<reference key="10">
    <citation type="journal article" date="1989" name="Genetics">
        <title>Mutations in the Saccharomyces cerevisiae opi3 gene: effects on phospholipid methylation, growth and cross-pathway regulation of inositol synthesis.</title>
        <authorList>
            <person name="McGraw P."/>
            <person name="Henry S.A."/>
        </authorList>
    </citation>
    <scope>FUNCTION</scope>
</reference>
<reference key="11">
    <citation type="journal article" date="1990" name="Biochim. Biophys. Acta">
        <title>Phosphatidylethanolamine methyltransferase and phospholipid methyltransferase activities from Saccharomyces cerevisiae. Enzymological and kinetic properties.</title>
        <authorList>
            <person name="Gaynor P.M."/>
            <person name="Carman G.M."/>
        </authorList>
    </citation>
    <scope>CATALYTIC ACTIVITY</scope>
    <scope>BIOPHYSICOCHEMICAL PROPERTIES</scope>
    <scope>FUNCTION</scope>
</reference>
<reference key="12">
    <citation type="journal article" date="1991" name="Biochim. Biophys. Acta">
        <title>Regulation of phosphatidylethanolamine methyltransferase and phospholipid methyltransferase by phospholipid precursors in Saccharomyces cerevisiae.</title>
        <authorList>
            <person name="Gaynor P.M."/>
            <person name="Gill T."/>
            <person name="Toutenhoofd S."/>
            <person name="Summers E.F."/>
            <person name="McGraw P."/>
            <person name="Homann M.J."/>
            <person name="Henry S.A."/>
            <person name="Carman G.M."/>
        </authorList>
    </citation>
    <scope>INDUCTION</scope>
</reference>
<reference key="13">
    <citation type="journal article" date="1991" name="J. Biochem.">
        <title>Identification of the upstream activation sequences responsible for the expression and regulation of the PEM1 and PEM2 genes encoding the enzymes of the phosphatidylethanolamine methylation pathway in Saccharomyces cerevisiae.</title>
        <authorList>
            <person name="Kodaki T."/>
            <person name="Hosaka K."/>
            <person name="Nikawa J."/>
            <person name="Yamashita S."/>
        </authorList>
    </citation>
    <scope>INDUCTION</scope>
</reference>
<reference key="14">
    <citation type="journal article" date="1996" name="Nucleic Acids Res.">
        <title>The yeast UME6 gene is required for both negative and positive transcriptional regulation of phospholipid biosynthetic gene expression.</title>
        <authorList>
            <person name="Jackson J.C."/>
            <person name="Lopes J.M."/>
        </authorList>
    </citation>
    <scope>INDUCTION</scope>
</reference>
<reference key="15">
    <citation type="journal article" date="2003" name="Nature">
        <title>Global analysis of protein localization in budding yeast.</title>
        <authorList>
            <person name="Huh W.-K."/>
            <person name="Falvo J.V."/>
            <person name="Gerke L.C."/>
            <person name="Carroll A.S."/>
            <person name="Howson R.W."/>
            <person name="Weissman J.S."/>
            <person name="O'Shea E.K."/>
        </authorList>
    </citation>
    <scope>SUBCELLULAR LOCATION [LARGE SCALE ANALYSIS]</scope>
</reference>
<reference key="16">
    <citation type="journal article" date="2003" name="Nature">
        <title>Global analysis of protein expression in yeast.</title>
        <authorList>
            <person name="Ghaemmaghami S."/>
            <person name="Huh W.-K."/>
            <person name="Bower K."/>
            <person name="Howson R.W."/>
            <person name="Belle A."/>
            <person name="Dephoure N."/>
            <person name="O'Shea E.K."/>
            <person name="Weissman J.S."/>
        </authorList>
    </citation>
    <scope>LEVEL OF PROTEIN EXPRESSION [LARGE SCALE ANALYSIS]</scope>
</reference>
<reference key="17">
    <citation type="journal article" date="2003" name="Proc. Natl. Acad. Sci. U.S.A.">
        <title>The proteome of Saccharomyces cerevisiae mitochondria.</title>
        <authorList>
            <person name="Sickmann A."/>
            <person name="Reinders J."/>
            <person name="Wagner Y."/>
            <person name="Joppich C."/>
            <person name="Zahedi R.P."/>
            <person name="Meyer H.E."/>
            <person name="Schoenfisch B."/>
            <person name="Perschil I."/>
            <person name="Chacinska A."/>
            <person name="Guiard B."/>
            <person name="Rehling P."/>
            <person name="Pfanner N."/>
            <person name="Meisinger C."/>
        </authorList>
    </citation>
    <scope>SUBCELLULAR LOCATION [LARGE SCALE ANALYSIS]</scope>
    <scope>MASS SPECTROMETRY</scope>
</reference>
<reference key="18">
    <citation type="journal article" date="2011" name="Biochim. Biophys. Acta">
        <title>Quantitative profiling of PE, MMPE, DMPE, and PC lipid species by multiple precursor ion scanning: a tool for monitoring PE metabolism.</title>
        <authorList>
            <person name="Bilgin M."/>
            <person name="Markgraf D.F."/>
            <person name="Duchoslav E."/>
            <person name="Knudsen J."/>
            <person name="Jensen O.N."/>
            <person name="de Kroon A.I."/>
            <person name="Ejsing C.S."/>
        </authorList>
    </citation>
    <scope>FUNCTION</scope>
    <scope>CATALYTIC ACTIVITY</scope>
</reference>
<proteinExistence type="evidence at protein level"/>
<dbReference type="EC" id="2.1.1.17" evidence="8 9 11"/>
<dbReference type="EC" id="2.1.1.71" evidence="1 7 8 9 11"/>
<dbReference type="EMBL" id="M16988">
    <property type="protein sequence ID" value="AAA34851.1"/>
    <property type="molecule type" value="Genomic_DNA"/>
</dbReference>
<dbReference type="EMBL" id="Z49573">
    <property type="protein sequence ID" value="CAA89601.1"/>
    <property type="molecule type" value="Genomic_DNA"/>
</dbReference>
<dbReference type="EMBL" id="L47993">
    <property type="protein sequence ID" value="AAB39298.1"/>
    <property type="molecule type" value="Genomic_DNA"/>
</dbReference>
<dbReference type="EMBL" id="AY557899">
    <property type="protein sequence ID" value="AAS56225.1"/>
    <property type="molecule type" value="Genomic_DNA"/>
</dbReference>
<dbReference type="EMBL" id="BK006943">
    <property type="protein sequence ID" value="DAA08859.1"/>
    <property type="molecule type" value="Genomic_DNA"/>
</dbReference>
<dbReference type="PIR" id="B28443">
    <property type="entry name" value="B28443"/>
</dbReference>
<dbReference type="RefSeq" id="NP_012607.1">
    <property type="nucleotide sequence ID" value="NM_001181731.1"/>
</dbReference>
<dbReference type="BioGRID" id="33829">
    <property type="interactions" value="626"/>
</dbReference>
<dbReference type="DIP" id="DIP-2888N"/>
<dbReference type="FunCoup" id="P05375">
    <property type="interactions" value="90"/>
</dbReference>
<dbReference type="IntAct" id="P05375">
    <property type="interactions" value="3"/>
</dbReference>
<dbReference type="MINT" id="P05375"/>
<dbReference type="STRING" id="4932.YJR073C"/>
<dbReference type="SwissLipids" id="SLP:000000084"/>
<dbReference type="PaxDb" id="4932-YJR073C"/>
<dbReference type="PeptideAtlas" id="P05375"/>
<dbReference type="DNASU" id="853536"/>
<dbReference type="EnsemblFungi" id="YJR073C_mRNA">
    <property type="protein sequence ID" value="YJR073C"/>
    <property type="gene ID" value="YJR073C"/>
</dbReference>
<dbReference type="GeneID" id="853536"/>
<dbReference type="KEGG" id="sce:YJR073C"/>
<dbReference type="AGR" id="SGD:S000003834"/>
<dbReference type="SGD" id="S000003834">
    <property type="gene designation" value="OPI3"/>
</dbReference>
<dbReference type="VEuPathDB" id="FungiDB:YJR073C"/>
<dbReference type="eggNOG" id="KOG4142">
    <property type="taxonomic scope" value="Eukaryota"/>
</dbReference>
<dbReference type="GeneTree" id="ENSGT00390000007041"/>
<dbReference type="HOGENOM" id="CLU_086119_0_0_1"/>
<dbReference type="InParanoid" id="P05375"/>
<dbReference type="OMA" id="PTFWNIA"/>
<dbReference type="OrthoDB" id="8300106at2759"/>
<dbReference type="BioCyc" id="MetaCyc:YJR073C-MONOMER"/>
<dbReference type="BioCyc" id="YEAST:YJR073C-MONOMER"/>
<dbReference type="Reactome" id="R-SCE-1483191">
    <property type="pathway name" value="Synthesis of PC"/>
</dbReference>
<dbReference type="UniPathway" id="UPA00753"/>
<dbReference type="BioGRID-ORCS" id="853536">
    <property type="hits" value="7 hits in 10 CRISPR screens"/>
</dbReference>
<dbReference type="PRO" id="PR:P05375"/>
<dbReference type="Proteomes" id="UP000002311">
    <property type="component" value="Chromosome X"/>
</dbReference>
<dbReference type="RNAct" id="P05375">
    <property type="molecule type" value="protein"/>
</dbReference>
<dbReference type="GO" id="GO:0071944">
    <property type="term" value="C:cell periphery"/>
    <property type="evidence" value="ECO:0007005"/>
    <property type="project" value="SGD"/>
</dbReference>
<dbReference type="GO" id="GO:0005783">
    <property type="term" value="C:endoplasmic reticulum"/>
    <property type="evidence" value="ECO:0007005"/>
    <property type="project" value="SGD"/>
</dbReference>
<dbReference type="GO" id="GO:0005789">
    <property type="term" value="C:endoplasmic reticulum membrane"/>
    <property type="evidence" value="ECO:0007669"/>
    <property type="project" value="UniProtKB-SubCell"/>
</dbReference>
<dbReference type="GO" id="GO:0031966">
    <property type="term" value="C:mitochondrial membrane"/>
    <property type="evidence" value="ECO:0007669"/>
    <property type="project" value="UniProtKB-SubCell"/>
</dbReference>
<dbReference type="GO" id="GO:0005739">
    <property type="term" value="C:mitochondrion"/>
    <property type="evidence" value="ECO:0007005"/>
    <property type="project" value="SGD"/>
</dbReference>
<dbReference type="GO" id="GO:0000773">
    <property type="term" value="F:phosphatidyl-N-methylethanolamine N-methyltransferase activity"/>
    <property type="evidence" value="ECO:0000314"/>
    <property type="project" value="SGD"/>
</dbReference>
<dbReference type="GO" id="GO:0004608">
    <property type="term" value="F:phosphatidylethanolamine N-methyltransferase activity"/>
    <property type="evidence" value="ECO:0007669"/>
    <property type="project" value="UniProtKB-EC"/>
</dbReference>
<dbReference type="GO" id="GO:0032259">
    <property type="term" value="P:methylation"/>
    <property type="evidence" value="ECO:0007669"/>
    <property type="project" value="UniProtKB-KW"/>
</dbReference>
<dbReference type="GO" id="GO:0006656">
    <property type="term" value="P:phosphatidylcholine biosynthetic process"/>
    <property type="evidence" value="ECO:0000314"/>
    <property type="project" value="SGD"/>
</dbReference>
<dbReference type="FunFam" id="1.20.120.1630:FF:000005">
    <property type="entry name" value="Phosphatidylethanolamine N-methyltransferase"/>
    <property type="match status" value="1"/>
</dbReference>
<dbReference type="Gene3D" id="1.20.120.1630">
    <property type="match status" value="1"/>
</dbReference>
<dbReference type="HAMAP" id="MF_03216">
    <property type="entry name" value="PLMT"/>
    <property type="match status" value="1"/>
</dbReference>
<dbReference type="InterPro" id="IPR024960">
    <property type="entry name" value="PEMT/MFAP"/>
</dbReference>
<dbReference type="InterPro" id="IPR007318">
    <property type="entry name" value="Phopholipid_MeTrfase"/>
</dbReference>
<dbReference type="PANTHER" id="PTHR15458">
    <property type="entry name" value="PHOSPHATIDYLETHANOLAMINE N-METHYLTRANSFERASE"/>
    <property type="match status" value="1"/>
</dbReference>
<dbReference type="PANTHER" id="PTHR15458:SF5">
    <property type="entry name" value="PHOSPHATIDYLETHANOLAMINE N-METHYLTRANSFERASE"/>
    <property type="match status" value="1"/>
</dbReference>
<dbReference type="Pfam" id="PF04191">
    <property type="entry name" value="PEMT"/>
    <property type="match status" value="1"/>
</dbReference>
<dbReference type="PIRSF" id="PIRSF005444">
    <property type="entry name" value="PEMT"/>
    <property type="match status" value="1"/>
</dbReference>
<dbReference type="PROSITE" id="PS51599">
    <property type="entry name" value="SAM_PEMT_PEM2"/>
    <property type="match status" value="1"/>
</dbReference>
<organism>
    <name type="scientific">Saccharomyces cerevisiae (strain ATCC 204508 / S288c)</name>
    <name type="common">Baker's yeast</name>
    <dbReference type="NCBI Taxonomy" id="559292"/>
    <lineage>
        <taxon>Eukaryota</taxon>
        <taxon>Fungi</taxon>
        <taxon>Dikarya</taxon>
        <taxon>Ascomycota</taxon>
        <taxon>Saccharomycotina</taxon>
        <taxon>Saccharomycetes</taxon>
        <taxon>Saccharomycetales</taxon>
        <taxon>Saccharomycetaceae</taxon>
        <taxon>Saccharomyces</taxon>
    </lineage>
</organism>
<sequence length="206" mass="23150">MKESVQEIIQQLIHSVDLQSSKFQLAIVCTMFNPIFWNIVARMEYHKHSLTKMCGGARKGCYMLAATIFSLGIVRDMVYESALREQPTCSLITGENWTKLGVALFGLGQVLVLSSMYKLGITGTYLGDYFGILMDERVTGFPFNVSNNPMYQGSTLSFLGIALYKGKPAGLVVSAVVYFMYKIALRWEEPFTAMIYANRDKAKKNM</sequence>